<accession>A1BH02</accession>
<organism>
    <name type="scientific">Chlorobium phaeobacteroides (strain DSM 266 / SMG 266 / 2430)</name>
    <dbReference type="NCBI Taxonomy" id="290317"/>
    <lineage>
        <taxon>Bacteria</taxon>
        <taxon>Pseudomonadati</taxon>
        <taxon>Chlorobiota</taxon>
        <taxon>Chlorobiia</taxon>
        <taxon>Chlorobiales</taxon>
        <taxon>Chlorobiaceae</taxon>
        <taxon>Chlorobium/Pelodictyon group</taxon>
        <taxon>Chlorobium</taxon>
    </lineage>
</organism>
<protein>
    <recommendedName>
        <fullName evidence="1">3-methyl-2-oxobutanoate hydroxymethyltransferase</fullName>
        <ecNumber evidence="1">2.1.2.11</ecNumber>
    </recommendedName>
    <alternativeName>
        <fullName evidence="1">Ketopantoate hydroxymethyltransferase</fullName>
        <shortName evidence="1">KPHMT</shortName>
    </alternativeName>
</protein>
<reference key="1">
    <citation type="submission" date="2006-12" db="EMBL/GenBank/DDBJ databases">
        <title>Complete sequence of Chlorobium phaeobacteroides DSM 266.</title>
        <authorList>
            <consortium name="US DOE Joint Genome Institute"/>
            <person name="Copeland A."/>
            <person name="Lucas S."/>
            <person name="Lapidus A."/>
            <person name="Barry K."/>
            <person name="Detter J.C."/>
            <person name="Glavina del Rio T."/>
            <person name="Hammon N."/>
            <person name="Israni S."/>
            <person name="Pitluck S."/>
            <person name="Goltsman E."/>
            <person name="Schmutz J."/>
            <person name="Larimer F."/>
            <person name="Land M."/>
            <person name="Hauser L."/>
            <person name="Mikhailova N."/>
            <person name="Li T."/>
            <person name="Overmann J."/>
            <person name="Bryant D.A."/>
            <person name="Richardson P."/>
        </authorList>
    </citation>
    <scope>NUCLEOTIDE SEQUENCE [LARGE SCALE GENOMIC DNA]</scope>
    <source>
        <strain>DSM 266 / SMG 266 / 2430</strain>
    </source>
</reference>
<comment type="function">
    <text evidence="1">Catalyzes the reversible reaction in which hydroxymethyl group from 5,10-methylenetetrahydrofolate is transferred onto alpha-ketoisovalerate to form ketopantoate.</text>
</comment>
<comment type="catalytic activity">
    <reaction evidence="1">
        <text>3-methyl-2-oxobutanoate + (6R)-5,10-methylene-5,6,7,8-tetrahydrofolate + H2O = 2-dehydropantoate + (6S)-5,6,7,8-tetrahydrofolate</text>
        <dbReference type="Rhea" id="RHEA:11824"/>
        <dbReference type="ChEBI" id="CHEBI:11561"/>
        <dbReference type="ChEBI" id="CHEBI:11851"/>
        <dbReference type="ChEBI" id="CHEBI:15377"/>
        <dbReference type="ChEBI" id="CHEBI:15636"/>
        <dbReference type="ChEBI" id="CHEBI:57453"/>
        <dbReference type="EC" id="2.1.2.11"/>
    </reaction>
</comment>
<comment type="cofactor">
    <cofactor evidence="1">
        <name>Mg(2+)</name>
        <dbReference type="ChEBI" id="CHEBI:18420"/>
    </cofactor>
    <text evidence="1">Binds 1 Mg(2+) ion per subunit.</text>
</comment>
<comment type="pathway">
    <text evidence="1">Cofactor biosynthesis; (R)-pantothenate biosynthesis; (R)-pantoate from 3-methyl-2-oxobutanoate: step 1/2.</text>
</comment>
<comment type="subunit">
    <text evidence="1">Homodecamer; pentamer of dimers.</text>
</comment>
<comment type="subcellular location">
    <subcellularLocation>
        <location evidence="1">Cytoplasm</location>
    </subcellularLocation>
</comment>
<comment type="similarity">
    <text evidence="1">Belongs to the PanB family.</text>
</comment>
<evidence type="ECO:0000255" key="1">
    <source>
        <dbReference type="HAMAP-Rule" id="MF_00156"/>
    </source>
</evidence>
<keyword id="KW-0963">Cytoplasm</keyword>
<keyword id="KW-0460">Magnesium</keyword>
<keyword id="KW-0479">Metal-binding</keyword>
<keyword id="KW-0566">Pantothenate biosynthesis</keyword>
<keyword id="KW-1185">Reference proteome</keyword>
<keyword id="KW-0808">Transferase</keyword>
<dbReference type="EC" id="2.1.2.11" evidence="1"/>
<dbReference type="EMBL" id="CP000492">
    <property type="protein sequence ID" value="ABL65679.1"/>
    <property type="molecule type" value="Genomic_DNA"/>
</dbReference>
<dbReference type="RefSeq" id="WP_011745489.1">
    <property type="nucleotide sequence ID" value="NC_008639.1"/>
</dbReference>
<dbReference type="SMR" id="A1BH02"/>
<dbReference type="STRING" id="290317.Cpha266_1658"/>
<dbReference type="KEGG" id="cph:Cpha266_1658"/>
<dbReference type="eggNOG" id="COG0413">
    <property type="taxonomic scope" value="Bacteria"/>
</dbReference>
<dbReference type="HOGENOM" id="CLU_036645_1_0_10"/>
<dbReference type="OrthoDB" id="9781789at2"/>
<dbReference type="UniPathway" id="UPA00028">
    <property type="reaction ID" value="UER00003"/>
</dbReference>
<dbReference type="Proteomes" id="UP000008701">
    <property type="component" value="Chromosome"/>
</dbReference>
<dbReference type="GO" id="GO:0005737">
    <property type="term" value="C:cytoplasm"/>
    <property type="evidence" value="ECO:0007669"/>
    <property type="project" value="UniProtKB-SubCell"/>
</dbReference>
<dbReference type="GO" id="GO:0003864">
    <property type="term" value="F:3-methyl-2-oxobutanoate hydroxymethyltransferase activity"/>
    <property type="evidence" value="ECO:0007669"/>
    <property type="project" value="UniProtKB-UniRule"/>
</dbReference>
<dbReference type="GO" id="GO:0000287">
    <property type="term" value="F:magnesium ion binding"/>
    <property type="evidence" value="ECO:0007669"/>
    <property type="project" value="TreeGrafter"/>
</dbReference>
<dbReference type="GO" id="GO:0015940">
    <property type="term" value="P:pantothenate biosynthetic process"/>
    <property type="evidence" value="ECO:0007669"/>
    <property type="project" value="UniProtKB-UniRule"/>
</dbReference>
<dbReference type="CDD" id="cd06557">
    <property type="entry name" value="KPHMT-like"/>
    <property type="match status" value="1"/>
</dbReference>
<dbReference type="FunFam" id="3.20.20.60:FF:000017">
    <property type="entry name" value="3-methyl-2-oxobutanoate hydroxymethyltransferase"/>
    <property type="match status" value="1"/>
</dbReference>
<dbReference type="Gene3D" id="3.20.20.60">
    <property type="entry name" value="Phosphoenolpyruvate-binding domains"/>
    <property type="match status" value="1"/>
</dbReference>
<dbReference type="HAMAP" id="MF_00156">
    <property type="entry name" value="PanB"/>
    <property type="match status" value="1"/>
</dbReference>
<dbReference type="InterPro" id="IPR003700">
    <property type="entry name" value="Pantoate_hydroxy_MeTrfase"/>
</dbReference>
<dbReference type="InterPro" id="IPR015813">
    <property type="entry name" value="Pyrv/PenolPyrv_kinase-like_dom"/>
</dbReference>
<dbReference type="InterPro" id="IPR040442">
    <property type="entry name" value="Pyrv_kinase-like_dom_sf"/>
</dbReference>
<dbReference type="NCBIfam" id="TIGR00222">
    <property type="entry name" value="panB"/>
    <property type="match status" value="1"/>
</dbReference>
<dbReference type="NCBIfam" id="NF001452">
    <property type="entry name" value="PRK00311.1"/>
    <property type="match status" value="1"/>
</dbReference>
<dbReference type="PANTHER" id="PTHR20881">
    <property type="entry name" value="3-METHYL-2-OXOBUTANOATE HYDROXYMETHYLTRANSFERASE"/>
    <property type="match status" value="1"/>
</dbReference>
<dbReference type="PANTHER" id="PTHR20881:SF0">
    <property type="entry name" value="3-METHYL-2-OXOBUTANOATE HYDROXYMETHYLTRANSFERASE"/>
    <property type="match status" value="1"/>
</dbReference>
<dbReference type="Pfam" id="PF02548">
    <property type="entry name" value="Pantoate_transf"/>
    <property type="match status" value="1"/>
</dbReference>
<dbReference type="PIRSF" id="PIRSF000388">
    <property type="entry name" value="Pantoate_hydroxy_MeTrfase"/>
    <property type="match status" value="1"/>
</dbReference>
<dbReference type="SUPFAM" id="SSF51621">
    <property type="entry name" value="Phosphoenolpyruvate/pyruvate domain"/>
    <property type="match status" value="1"/>
</dbReference>
<name>PANB_CHLPD</name>
<feature type="chain" id="PRO_0000297244" description="3-methyl-2-oxobutanoate hydroxymethyltransferase">
    <location>
        <begin position="1"/>
        <end position="277"/>
    </location>
</feature>
<feature type="active site" description="Proton acceptor" evidence="1">
    <location>
        <position position="195"/>
    </location>
</feature>
<feature type="binding site" evidence="1">
    <location>
        <begin position="53"/>
        <end position="54"/>
    </location>
    <ligand>
        <name>3-methyl-2-oxobutanoate</name>
        <dbReference type="ChEBI" id="CHEBI:11851"/>
    </ligand>
</feature>
<feature type="binding site" evidence="1">
    <location>
        <position position="53"/>
    </location>
    <ligand>
        <name>Mg(2+)</name>
        <dbReference type="ChEBI" id="CHEBI:18420"/>
    </ligand>
</feature>
<feature type="binding site" evidence="1">
    <location>
        <position position="96"/>
    </location>
    <ligand>
        <name>3-methyl-2-oxobutanoate</name>
        <dbReference type="ChEBI" id="CHEBI:11851"/>
    </ligand>
</feature>
<feature type="binding site" evidence="1">
    <location>
        <position position="96"/>
    </location>
    <ligand>
        <name>Mg(2+)</name>
        <dbReference type="ChEBI" id="CHEBI:18420"/>
    </ligand>
</feature>
<feature type="binding site" evidence="1">
    <location>
        <position position="126"/>
    </location>
    <ligand>
        <name>3-methyl-2-oxobutanoate</name>
        <dbReference type="ChEBI" id="CHEBI:11851"/>
    </ligand>
</feature>
<feature type="binding site" evidence="1">
    <location>
        <position position="128"/>
    </location>
    <ligand>
        <name>Mg(2+)</name>
        <dbReference type="ChEBI" id="CHEBI:18420"/>
    </ligand>
</feature>
<gene>
    <name evidence="1" type="primary">panB</name>
    <name type="ordered locus">Cpha266_1658</name>
</gene>
<sequence length="277" mass="30328">MNTSNQHKAGHVTTRKLLDMKQQGEKISVLTAYDYTMARILDRAGIDVILVGDSASNVFSGHATTLPITIEEMIYHAKAVVRGVHDESGRAMVVVDMPFMSYQISGDEALRNAGKIMKEHGCDALKLEGGKIIADTVKRITDVGIPVMGHLGLMPQSIYKYGSYKVRAQEEQEAEQLLQDARLLEEAGAFAVVLEKIPSALAAEVTLMLTIPTIGIGAGSHCDGQVLVVNDILGLNREFHPRFVRQYANLNNVIDRAVQQYVDDVKQGGFPADDESY</sequence>
<proteinExistence type="inferred from homology"/>